<reference key="1">
    <citation type="journal article" date="1999" name="Nature">
        <title>Sequence and analysis of chromosome 2 of the plant Arabidopsis thaliana.</title>
        <authorList>
            <person name="Lin X."/>
            <person name="Kaul S."/>
            <person name="Rounsley S.D."/>
            <person name="Shea T.P."/>
            <person name="Benito M.-I."/>
            <person name="Town C.D."/>
            <person name="Fujii C.Y."/>
            <person name="Mason T.M."/>
            <person name="Bowman C.L."/>
            <person name="Barnstead M.E."/>
            <person name="Feldblyum T.V."/>
            <person name="Buell C.R."/>
            <person name="Ketchum K.A."/>
            <person name="Lee J.J."/>
            <person name="Ronning C.M."/>
            <person name="Koo H.L."/>
            <person name="Moffat K.S."/>
            <person name="Cronin L.A."/>
            <person name="Shen M."/>
            <person name="Pai G."/>
            <person name="Van Aken S."/>
            <person name="Umayam L."/>
            <person name="Tallon L.J."/>
            <person name="Gill J.E."/>
            <person name="Adams M.D."/>
            <person name="Carrera A.J."/>
            <person name="Creasy T.H."/>
            <person name="Goodman H.M."/>
            <person name="Somerville C.R."/>
            <person name="Copenhaver G.P."/>
            <person name="Preuss D."/>
            <person name="Nierman W.C."/>
            <person name="White O."/>
            <person name="Eisen J.A."/>
            <person name="Salzberg S.L."/>
            <person name="Fraser C.M."/>
            <person name="Venter J.C."/>
        </authorList>
    </citation>
    <scope>NUCLEOTIDE SEQUENCE [LARGE SCALE GENOMIC DNA]</scope>
    <source>
        <strain>cv. Columbia</strain>
    </source>
</reference>
<reference key="2">
    <citation type="journal article" date="2017" name="Plant J.">
        <title>Araport11: a complete reannotation of the Arabidopsis thaliana reference genome.</title>
        <authorList>
            <person name="Cheng C.Y."/>
            <person name="Krishnakumar V."/>
            <person name="Chan A.P."/>
            <person name="Thibaud-Nissen F."/>
            <person name="Schobel S."/>
            <person name="Town C.D."/>
        </authorList>
    </citation>
    <scope>GENOME REANNOTATION</scope>
    <source>
        <strain>cv. Columbia</strain>
    </source>
</reference>
<reference key="3">
    <citation type="submission" date="2004-03" db="EMBL/GenBank/DDBJ databases">
        <title>Arabidopsis ORF clones.</title>
        <authorList>
            <person name="Cheuk R."/>
            <person name="Chen H."/>
            <person name="Kim C.J."/>
            <person name="Shinn P."/>
            <person name="Ecker J.R."/>
        </authorList>
    </citation>
    <scope>NUCLEOTIDE SEQUENCE [LARGE SCALE MRNA]</scope>
</reference>
<reference key="4">
    <citation type="submission" date="2006-07" db="EMBL/GenBank/DDBJ databases">
        <title>Large-scale analysis of RIKEN Arabidopsis full-length (RAFL) cDNAs.</title>
        <authorList>
            <person name="Totoki Y."/>
            <person name="Seki M."/>
            <person name="Ishida J."/>
            <person name="Nakajima M."/>
            <person name="Enju A."/>
            <person name="Kamiya A."/>
            <person name="Narusaka M."/>
            <person name="Shin-i T."/>
            <person name="Nakagawa M."/>
            <person name="Sakamoto N."/>
            <person name="Oishi K."/>
            <person name="Kohara Y."/>
            <person name="Kobayashi M."/>
            <person name="Toyoda A."/>
            <person name="Sakaki Y."/>
            <person name="Sakurai T."/>
            <person name="Iida K."/>
            <person name="Akiyama K."/>
            <person name="Satou M."/>
            <person name="Toyoda T."/>
            <person name="Konagaya A."/>
            <person name="Carninci P."/>
            <person name="Kawai J."/>
            <person name="Hayashizaki Y."/>
            <person name="Shinozaki K."/>
        </authorList>
    </citation>
    <scope>NUCLEOTIDE SEQUENCE [LARGE SCALE MRNA]</scope>
    <source>
        <strain>cv. Columbia</strain>
    </source>
</reference>
<reference key="5">
    <citation type="journal article" date="2012" name="Int. J. Mol. Sci.">
        <title>Arabidopsis RIBA Proteins: two out of three isoforms have lost their bifunctional activity in riboflavin biosynthesis.</title>
        <authorList>
            <person name="Hiltunen H.M."/>
            <person name="Illarionov B."/>
            <person name="Hedtke B."/>
            <person name="Fischer M."/>
            <person name="Grimm B."/>
        </authorList>
    </citation>
    <scope>FUNCTION</scope>
    <scope>CATALYTIC ACTIVITY</scope>
    <scope>TISSUE SPECIFICITY</scope>
    <scope>SUBCELLULAR LOCATION</scope>
</reference>
<reference key="6">
    <citation type="journal article" date="2012" name="Plant Mol. Biol.">
        <title>Deficiency in riboflavin biosynthesis affects tetrapyrrole biosynthesis in etiolated Arabidopsis tissue.</title>
        <authorList>
            <person name="Hedtke B."/>
            <person name="Alawady A."/>
            <person name="Albacete A."/>
            <person name="Kobayashi K."/>
            <person name="Melzer M."/>
            <person name="Roitsch T."/>
            <person name="Masuda T."/>
            <person name="Grimm B."/>
        </authorList>
    </citation>
    <scope>FUNCTION</scope>
</reference>
<feature type="transit peptide" description="Chloroplast" evidence="2">
    <location>
        <begin position="1"/>
        <end position="54"/>
    </location>
</feature>
<feature type="chain" id="PRO_0000422708" description="Monofunctional riboflavin biosynthesis protein RIBA 2, chloroplastic">
    <location>
        <begin position="55"/>
        <end position="476"/>
    </location>
</feature>
<feature type="region of interest" description="DHBP synthase">
    <location>
        <begin position="44"/>
        <end position="306"/>
    </location>
</feature>
<feature type="region of interest" description="Inactive GTP cyclohydrolase II">
    <location>
        <begin position="307"/>
        <end position="476"/>
    </location>
</feature>
<feature type="binding site" evidence="1">
    <location>
        <begin position="130"/>
        <end position="131"/>
    </location>
    <ligand>
        <name>D-ribulose 5-phosphate</name>
        <dbReference type="ChEBI" id="CHEBI:58121"/>
    </ligand>
</feature>
<feature type="binding site" evidence="1">
    <location>
        <position position="131"/>
    </location>
    <ligand>
        <name>Mg(2+)</name>
        <dbReference type="ChEBI" id="CHEBI:18420"/>
        <label>1</label>
    </ligand>
</feature>
<feature type="binding site" evidence="1">
    <location>
        <position position="131"/>
    </location>
    <ligand>
        <name>Mg(2+)</name>
        <dbReference type="ChEBI" id="CHEBI:18420"/>
        <label>2</label>
    </ligand>
</feature>
<feature type="binding site" evidence="1">
    <location>
        <position position="135"/>
    </location>
    <ligand>
        <name>D-ribulose 5-phosphate</name>
        <dbReference type="ChEBI" id="CHEBI:58121"/>
    </ligand>
</feature>
<feature type="binding site" evidence="1">
    <location>
        <begin position="245"/>
        <end position="249"/>
    </location>
    <ligand>
        <name>D-ribulose 5-phosphate</name>
        <dbReference type="ChEBI" id="CHEBI:58121"/>
    </ligand>
</feature>
<feature type="binding site" evidence="1">
    <location>
        <position position="248"/>
    </location>
    <ligand>
        <name>Mg(2+)</name>
        <dbReference type="ChEBI" id="CHEBI:18420"/>
        <label>2</label>
    </ligand>
</feature>
<feature type="binding site" evidence="1">
    <location>
        <position position="269"/>
    </location>
    <ligand>
        <name>D-ribulose 5-phosphate</name>
        <dbReference type="ChEBI" id="CHEBI:58121"/>
    </ligand>
</feature>
<feature type="binding site" evidence="1">
    <location>
        <begin position="357"/>
        <end position="361"/>
    </location>
    <ligand>
        <name>GTP</name>
        <dbReference type="ChEBI" id="CHEBI:37565"/>
    </ligand>
</feature>
<feature type="binding site" evidence="1">
    <location>
        <position position="376"/>
    </location>
    <ligand>
        <name>GTP</name>
        <dbReference type="ChEBI" id="CHEBI:37565"/>
    </ligand>
</feature>
<feature type="binding site" evidence="1">
    <location>
        <begin position="399"/>
        <end position="401"/>
    </location>
    <ligand>
        <name>GTP</name>
        <dbReference type="ChEBI" id="CHEBI:37565"/>
    </ligand>
</feature>
<feature type="binding site" evidence="1">
    <location>
        <position position="450"/>
    </location>
    <ligand>
        <name>GTP</name>
        <dbReference type="ChEBI" id="CHEBI:37565"/>
    </ligand>
</feature>
<feature type="site" description="Essential for DHBP synthase activity" evidence="1">
    <location>
        <position position="231"/>
    </location>
</feature>
<feature type="site" description="Essential for DHBP synthase activity" evidence="1">
    <location>
        <position position="269"/>
    </location>
</feature>
<organism>
    <name type="scientific">Arabidopsis thaliana</name>
    <name type="common">Mouse-ear cress</name>
    <dbReference type="NCBI Taxonomy" id="3702"/>
    <lineage>
        <taxon>Eukaryota</taxon>
        <taxon>Viridiplantae</taxon>
        <taxon>Streptophyta</taxon>
        <taxon>Embryophyta</taxon>
        <taxon>Tracheophyta</taxon>
        <taxon>Spermatophyta</taxon>
        <taxon>Magnoliopsida</taxon>
        <taxon>eudicotyledons</taxon>
        <taxon>Gunneridae</taxon>
        <taxon>Pentapetalae</taxon>
        <taxon>rosids</taxon>
        <taxon>malvids</taxon>
        <taxon>Brassicales</taxon>
        <taxon>Brassicaceae</taxon>
        <taxon>Camelineae</taxon>
        <taxon>Arabidopsis</taxon>
    </lineage>
</organism>
<sequence length="476" mass="52200">MASLTLRCDSTHLLPSRDVVKGTKPFGTSLVYPRIISKKFNVRMRVIPEEGDVFSSSKSNGSSMGIELQPDLVSFGTLAAEMIPTTMDSPEVEDEEFDLDRPTDGFASIPQAIEDIRHGKMVVVVDDEDRENEGDLIMAASLATPEAMAFVVKHGTGIVCVSMKGEDLERLELPLMVTRKDNEEKLRTAFTVSVDAKKGTSTGVSARDRAQTILTLASKDSKPEDFNRPGHIFPLRYREGGVLKRAGHTEASVDLTVLAGLEPVSVLCEIVDDDGSMARLPRLRQFAQENNLKLISIADLIRYRRKRERLVEFTAVAPIPTMWGPFKAHCFKSLLDGVEHIAMVKGEIGDGKDILVRVHAECITDDIFGNSSGGKQLAIAMRLIEENGRGVFVYLRGPESKGIDLSHKPRTYNTNSDQAEGVSFPVASREYGIGAQILRDLGVREMKVMTNNPAHYVGLKGYGLSISGKVPLITTP</sequence>
<evidence type="ECO:0000250" key="1"/>
<evidence type="ECO:0000255" key="2"/>
<evidence type="ECO:0000269" key="3">
    <source>
    </source>
</evidence>
<evidence type="ECO:0000269" key="4">
    <source>
    </source>
</evidence>
<evidence type="ECO:0000305" key="5"/>
<gene>
    <name type="primary">RIBA2</name>
    <name type="ordered locus">At2g22450</name>
    <name type="ORF">F14M13.15</name>
</gene>
<accession>Q6NLQ7</accession>
<accession>Q9SJY9</accession>
<proteinExistence type="evidence at protein level"/>
<dbReference type="EC" id="4.1.99.12"/>
<dbReference type="EMBL" id="AC006592">
    <property type="protein sequence ID" value="AAD22355.1"/>
    <property type="status" value="ALT_SEQ"/>
    <property type="molecule type" value="Genomic_DNA"/>
</dbReference>
<dbReference type="EMBL" id="CP002685">
    <property type="protein sequence ID" value="AEC07307.1"/>
    <property type="molecule type" value="Genomic_DNA"/>
</dbReference>
<dbReference type="EMBL" id="BT011627">
    <property type="protein sequence ID" value="AAS47633.1"/>
    <property type="molecule type" value="mRNA"/>
</dbReference>
<dbReference type="EMBL" id="BT012273">
    <property type="protein sequence ID" value="AAS76760.1"/>
    <property type="molecule type" value="mRNA"/>
</dbReference>
<dbReference type="EMBL" id="AK228961">
    <property type="protein sequence ID" value="BAF00850.1"/>
    <property type="molecule type" value="mRNA"/>
</dbReference>
<dbReference type="PIR" id="G84612">
    <property type="entry name" value="G84612"/>
</dbReference>
<dbReference type="RefSeq" id="NP_179831.2">
    <property type="nucleotide sequence ID" value="NM_127810.4"/>
</dbReference>
<dbReference type="SMR" id="Q6NLQ7"/>
<dbReference type="FunCoup" id="Q6NLQ7">
    <property type="interactions" value="253"/>
</dbReference>
<dbReference type="STRING" id="3702.Q6NLQ7"/>
<dbReference type="iPTMnet" id="Q6NLQ7"/>
<dbReference type="PaxDb" id="3702-AT2G22450.1"/>
<dbReference type="ProMEX" id="Q6NLQ7"/>
<dbReference type="ProteomicsDB" id="234889"/>
<dbReference type="EnsemblPlants" id="AT2G22450.1">
    <property type="protein sequence ID" value="AT2G22450.1"/>
    <property type="gene ID" value="AT2G22450"/>
</dbReference>
<dbReference type="GeneID" id="816777"/>
<dbReference type="Gramene" id="AT2G22450.1">
    <property type="protein sequence ID" value="AT2G22450.1"/>
    <property type="gene ID" value="AT2G22450"/>
</dbReference>
<dbReference type="KEGG" id="ath:AT2G22450"/>
<dbReference type="Araport" id="AT2G22450"/>
<dbReference type="TAIR" id="AT2G22450">
    <property type="gene designation" value="RIBA2"/>
</dbReference>
<dbReference type="eggNOG" id="KOG1284">
    <property type="taxonomic scope" value="Eukaryota"/>
</dbReference>
<dbReference type="HOGENOM" id="CLU_020273_1_1_1"/>
<dbReference type="InParanoid" id="Q6NLQ7"/>
<dbReference type="OMA" id="CDSTHLL"/>
<dbReference type="PhylomeDB" id="Q6NLQ7"/>
<dbReference type="BioCyc" id="ARA:AT2G22450-MONOMER"/>
<dbReference type="BRENDA" id="4.1.99.12">
    <property type="organism ID" value="399"/>
</dbReference>
<dbReference type="UniPathway" id="UPA00275">
    <property type="reaction ID" value="UER00399"/>
</dbReference>
<dbReference type="PRO" id="PR:Q6NLQ7"/>
<dbReference type="Proteomes" id="UP000006548">
    <property type="component" value="Chromosome 2"/>
</dbReference>
<dbReference type="ExpressionAtlas" id="Q6NLQ7">
    <property type="expression patterns" value="baseline and differential"/>
</dbReference>
<dbReference type="GO" id="GO:0009507">
    <property type="term" value="C:chloroplast"/>
    <property type="evidence" value="ECO:0000314"/>
    <property type="project" value="UniProtKB"/>
</dbReference>
<dbReference type="GO" id="GO:0008686">
    <property type="term" value="F:3,4-dihydroxy-2-butanone-4-phosphate synthase activity"/>
    <property type="evidence" value="ECO:0000314"/>
    <property type="project" value="UniProtKB"/>
</dbReference>
<dbReference type="GO" id="GO:0005525">
    <property type="term" value="F:GTP binding"/>
    <property type="evidence" value="ECO:0007669"/>
    <property type="project" value="UniProtKB-KW"/>
</dbReference>
<dbReference type="GO" id="GO:0046872">
    <property type="term" value="F:metal ion binding"/>
    <property type="evidence" value="ECO:0007669"/>
    <property type="project" value="UniProtKB-KW"/>
</dbReference>
<dbReference type="GO" id="GO:0009231">
    <property type="term" value="P:riboflavin biosynthetic process"/>
    <property type="evidence" value="ECO:0007669"/>
    <property type="project" value="UniProtKB-UniPathway"/>
</dbReference>
<dbReference type="FunFam" id="3.90.870.10:FF:000005">
    <property type="entry name" value="Bifunctional riboflavin biosynthesis protein RIBA 1 chloroplastic"/>
    <property type="match status" value="1"/>
</dbReference>
<dbReference type="FunFam" id="3.40.50.10990:FF:000010">
    <property type="entry name" value="Monofunctional riboflavin biosynthesis protein RIBA 2, chloroplastic"/>
    <property type="match status" value="1"/>
</dbReference>
<dbReference type="Gene3D" id="3.90.870.10">
    <property type="entry name" value="DHBP synthase"/>
    <property type="match status" value="1"/>
</dbReference>
<dbReference type="Gene3D" id="3.40.50.10990">
    <property type="entry name" value="GTP cyclohydrolase II"/>
    <property type="match status" value="1"/>
</dbReference>
<dbReference type="HAMAP" id="MF_00180">
    <property type="entry name" value="RibB"/>
    <property type="match status" value="1"/>
</dbReference>
<dbReference type="InterPro" id="IPR017945">
    <property type="entry name" value="DHBP_synth_RibB-like_a/b_dom"/>
</dbReference>
<dbReference type="InterPro" id="IPR000422">
    <property type="entry name" value="DHBP_synthase_RibB"/>
</dbReference>
<dbReference type="InterPro" id="IPR032677">
    <property type="entry name" value="GTP_cyclohydro_II"/>
</dbReference>
<dbReference type="InterPro" id="IPR036144">
    <property type="entry name" value="RibA-like_sf"/>
</dbReference>
<dbReference type="NCBIfam" id="TIGR00506">
    <property type="entry name" value="ribB"/>
    <property type="match status" value="1"/>
</dbReference>
<dbReference type="PANTHER" id="PTHR21327:SF18">
    <property type="entry name" value="3,4-DIHYDROXY-2-BUTANONE 4-PHOSPHATE SYNTHASE"/>
    <property type="match status" value="1"/>
</dbReference>
<dbReference type="PANTHER" id="PTHR21327">
    <property type="entry name" value="GTP CYCLOHYDROLASE II-RELATED"/>
    <property type="match status" value="1"/>
</dbReference>
<dbReference type="Pfam" id="PF00926">
    <property type="entry name" value="DHBP_synthase"/>
    <property type="match status" value="1"/>
</dbReference>
<dbReference type="Pfam" id="PF00925">
    <property type="entry name" value="GTP_cyclohydro2"/>
    <property type="match status" value="1"/>
</dbReference>
<dbReference type="SUPFAM" id="SSF142695">
    <property type="entry name" value="RibA-like"/>
    <property type="match status" value="1"/>
</dbReference>
<dbReference type="SUPFAM" id="SSF55821">
    <property type="entry name" value="YrdC/RibB"/>
    <property type="match status" value="1"/>
</dbReference>
<keyword id="KW-0150">Chloroplast</keyword>
<keyword id="KW-0342">GTP-binding</keyword>
<keyword id="KW-0456">Lyase</keyword>
<keyword id="KW-0460">Magnesium</keyword>
<keyword id="KW-0479">Metal-binding</keyword>
<keyword id="KW-0547">Nucleotide-binding</keyword>
<keyword id="KW-0934">Plastid</keyword>
<keyword id="KW-1185">Reference proteome</keyword>
<keyword id="KW-0686">Riboflavin biosynthesis</keyword>
<keyword id="KW-0809">Transit peptide</keyword>
<comment type="function">
    <text evidence="3 4">Involved in riboflavin biosynthesis. Catalyzes the conversion of D-ribulose 5-phosphate to formate and 3,4-dihydroxy-2-butanone 4-phosphate. RIBA2 and RIBA3 together are not able to complement the loss of function of RIBA1.</text>
</comment>
<comment type="catalytic activity">
    <reaction evidence="4">
        <text>D-ribulose 5-phosphate = (2S)-2-hydroxy-3-oxobutyl phosphate + formate + H(+)</text>
        <dbReference type="Rhea" id="RHEA:18457"/>
        <dbReference type="ChEBI" id="CHEBI:15378"/>
        <dbReference type="ChEBI" id="CHEBI:15740"/>
        <dbReference type="ChEBI" id="CHEBI:58121"/>
        <dbReference type="ChEBI" id="CHEBI:58830"/>
        <dbReference type="EC" id="4.1.99.12"/>
    </reaction>
</comment>
<comment type="cofactor">
    <cofactor evidence="1">
        <name>Mg(2+)</name>
        <dbReference type="ChEBI" id="CHEBI:18420"/>
    </cofactor>
    <cofactor evidence="1">
        <name>Mn(2+)</name>
        <dbReference type="ChEBI" id="CHEBI:29035"/>
    </cofactor>
    <text evidence="1">Binds 2 divalent metal cations per subunit. Magnesium or manganese.</text>
</comment>
<comment type="pathway">
    <text>Cofactor biosynthesis; riboflavin biosynthesis; 2-hydroxy-3-oxobutyl phosphate from D-ribulose 5-phosphate: step 1/1.</text>
</comment>
<comment type="subcellular location">
    <subcellularLocation>
        <location evidence="4">Plastid</location>
        <location evidence="4">Chloroplast</location>
    </subcellularLocation>
</comment>
<comment type="tissue specificity">
    <text evidence="4">Expressed in leaves, shoots, roots, flowers and siliques.</text>
</comment>
<comment type="similarity">
    <text evidence="5">In the N-terminal section; belongs to the DHBP synthase family.</text>
</comment>
<comment type="similarity">
    <text evidence="5">In the C-terminal section; belongs to the GTP cyclohydrolase II family.</text>
</comment>
<comment type="caution">
    <text evidence="5">The substrate-binding sites for the inactive GTP cyclohydrolase-2 activity are conserved while several cofactor-binding sites are lost.</text>
</comment>
<comment type="sequence caution" evidence="5">
    <conflict type="erroneous gene model prediction">
        <sequence resource="EMBL-CDS" id="AAD22355"/>
    </conflict>
</comment>
<protein>
    <recommendedName>
        <fullName>Monofunctional riboflavin biosynthesis protein RIBA 2, chloroplastic</fullName>
    </recommendedName>
    <domain>
        <recommendedName>
            <fullName>3,4-dihydroxy-2-butanone 4-phosphate synthase</fullName>
            <shortName>DHBP synthase</shortName>
            <ecNumber>4.1.99.12</ecNumber>
        </recommendedName>
    </domain>
    <domain>
        <recommendedName>
            <fullName>Inactive GTP cyclohydrolase-2</fullName>
        </recommendedName>
        <alternativeName>
            <fullName>GTP cyclohydrolase II</fullName>
        </alternativeName>
    </domain>
</protein>
<name>RIBA2_ARATH</name>